<sequence>MMQIDYLLTAIFDPDRGPVLQYQCPENGEASDLHFLAELMLPDRVHERREDWSLFFIHFSKKSNVFSLFSNVDDINFEPSDSNMYYVLNTIRAKRVEGTRRGGSVFAMAICTTFPHVHALKPLLDTAWEIFDSSPSLKTLSMLHKSFNLHNFQSFYQKLSLDSSLILALNNFWSFFNLYLTNSPHIMNDIINKDIDNIPKPGSELIELSRDSYNSQATFCLSAESQERYVTCVIPSIHIPECVGEVSISNLINTFIDGPSPFMNTDISADINPINVLITALLISKKVLFLTKTSSASVLADFVLSSCALVSGATGLLQGLTRITFPYIDLSNVESLVKLPGYLAGVMNPAFTHHADWWDVLCDIDNQTIQVSSNLFSDATTTMDTKSLFNNTSPFTPISKDNQDDEIFIKDLRKFLKADDKETLVRWRVRLYIQSFIRKATSYEALFLESSPLNPYYKDYKFKGFGWSWDNDDEKVNELLYLAPKFEAWRQASTYKDYCYRLHCASTPVLRCMDIQFHLDRLRNSSLSTTDAAEIFLALESHIRTEEDVNYLLSNCPLHSGGLSVIAFGLYHISDKVRKAVSKLLNRIETHKYGKLFYMALNKVDISTHVYINSQHKKKKDSF</sequence>
<name>YG76_SCHPO</name>
<organism>
    <name type="scientific">Schizosaccharomyces pombe (strain 972 / ATCC 24843)</name>
    <name type="common">Fission yeast</name>
    <dbReference type="NCBI Taxonomy" id="284812"/>
    <lineage>
        <taxon>Eukaryota</taxon>
        <taxon>Fungi</taxon>
        <taxon>Dikarya</taxon>
        <taxon>Ascomycota</taxon>
        <taxon>Taphrinomycotina</taxon>
        <taxon>Schizosaccharomycetes</taxon>
        <taxon>Schizosaccharomycetales</taxon>
        <taxon>Schizosaccharomycetaceae</taxon>
        <taxon>Schizosaccharomyces</taxon>
    </lineage>
</organism>
<proteinExistence type="inferred from homology"/>
<comment type="function">
    <text evidence="1">Involved in polarity establishment.</text>
</comment>
<comment type="subcellular location">
    <subcellularLocation>
        <location evidence="1">Cytoplasm</location>
        <location evidence="1">Cell cortex</location>
    </subcellularLocation>
    <subcellularLocation>
        <location evidence="3">Nucleus</location>
    </subcellularLocation>
</comment>
<comment type="similarity">
    <text evidence="4">Belongs to the AFI1/mesA family.</text>
</comment>
<accession>O94674</accession>
<dbReference type="EMBL" id="CU329671">
    <property type="protein sequence ID" value="CAA22879.2"/>
    <property type="molecule type" value="Genomic_DNA"/>
</dbReference>
<dbReference type="PIR" id="T40676">
    <property type="entry name" value="T40676"/>
</dbReference>
<dbReference type="RefSeq" id="NP_596321.2">
    <property type="nucleotide sequence ID" value="NM_001022243.2"/>
</dbReference>
<dbReference type="SMR" id="O94674"/>
<dbReference type="FunCoup" id="O94674">
    <property type="interactions" value="66"/>
</dbReference>
<dbReference type="STRING" id="284812.O94674"/>
<dbReference type="PaxDb" id="4896-SPBC776.06c.1"/>
<dbReference type="EnsemblFungi" id="SPBC776.06c.1">
    <property type="protein sequence ID" value="SPBC776.06c.1:pep"/>
    <property type="gene ID" value="SPBC776.06c"/>
</dbReference>
<dbReference type="KEGG" id="spo:2541190"/>
<dbReference type="PomBase" id="SPBC776.06c"/>
<dbReference type="VEuPathDB" id="FungiDB:SPBC776.06c"/>
<dbReference type="eggNOG" id="ENOG502QQUZ">
    <property type="taxonomic scope" value="Eukaryota"/>
</dbReference>
<dbReference type="HOGENOM" id="CLU_009044_0_0_1"/>
<dbReference type="InParanoid" id="O94674"/>
<dbReference type="OMA" id="WDVLCDC"/>
<dbReference type="PRO" id="PR:O94674"/>
<dbReference type="Proteomes" id="UP000002485">
    <property type="component" value="Chromosome II"/>
</dbReference>
<dbReference type="GO" id="GO:0005938">
    <property type="term" value="C:cell cortex"/>
    <property type="evidence" value="ECO:0007669"/>
    <property type="project" value="UniProtKB-SubCell"/>
</dbReference>
<dbReference type="GO" id="GO:0005829">
    <property type="term" value="C:cytosol"/>
    <property type="evidence" value="ECO:0007005"/>
    <property type="project" value="PomBase"/>
</dbReference>
<dbReference type="GO" id="GO:0005634">
    <property type="term" value="C:nucleus"/>
    <property type="evidence" value="ECO:0007005"/>
    <property type="project" value="PomBase"/>
</dbReference>
<dbReference type="GO" id="GO:0005886">
    <property type="term" value="C:plasma membrane"/>
    <property type="evidence" value="ECO:0000318"/>
    <property type="project" value="GO_Central"/>
</dbReference>
<dbReference type="GO" id="GO:0051666">
    <property type="term" value="P:actin cortical patch localization"/>
    <property type="evidence" value="ECO:0000318"/>
    <property type="project" value="GO_Central"/>
</dbReference>
<dbReference type="GO" id="GO:0030010">
    <property type="term" value="P:establishment of cell polarity"/>
    <property type="evidence" value="ECO:0000266"/>
    <property type="project" value="PomBase"/>
</dbReference>
<dbReference type="InterPro" id="IPR052809">
    <property type="entry name" value="Actin_polarity_regulatory"/>
</dbReference>
<dbReference type="InterPro" id="IPR012860">
    <property type="entry name" value="Afi1_N"/>
</dbReference>
<dbReference type="InterPro" id="IPR037516">
    <property type="entry name" value="Tripartite_DENN"/>
</dbReference>
<dbReference type="PANTHER" id="PTHR28245">
    <property type="entry name" value="ARF3-INTERACTING PROTEIN 1"/>
    <property type="match status" value="1"/>
</dbReference>
<dbReference type="PANTHER" id="PTHR28245:SF1">
    <property type="entry name" value="ARF3-INTERACTING PROTEIN 1"/>
    <property type="match status" value="1"/>
</dbReference>
<dbReference type="Pfam" id="PF07792">
    <property type="entry name" value="Afi1"/>
    <property type="match status" value="1"/>
</dbReference>
<dbReference type="Pfam" id="PF08616">
    <property type="entry name" value="SPA"/>
    <property type="match status" value="1"/>
</dbReference>
<dbReference type="PROSITE" id="PS50211">
    <property type="entry name" value="DENN"/>
    <property type="match status" value="1"/>
</dbReference>
<feature type="chain" id="PRO_0000374002" description="AFI1-like protein C776.06c">
    <location>
        <begin position="1"/>
        <end position="623"/>
    </location>
</feature>
<feature type="domain" description="uDENN" evidence="2">
    <location>
        <begin position="5"/>
        <end position="204"/>
    </location>
</feature>
<feature type="domain" description="cDENN" evidence="2">
    <location>
        <begin position="248"/>
        <end position="386"/>
    </location>
</feature>
<feature type="domain" description="dDENN" evidence="2">
    <location>
        <begin position="388"/>
        <end position="476"/>
    </location>
</feature>
<evidence type="ECO:0000250" key="1"/>
<evidence type="ECO:0000255" key="2">
    <source>
        <dbReference type="PROSITE-ProRule" id="PRU00304"/>
    </source>
</evidence>
<evidence type="ECO:0000269" key="3">
    <source>
    </source>
</evidence>
<evidence type="ECO:0000305" key="4"/>
<protein>
    <recommendedName>
        <fullName>AFI1-like protein C776.06c</fullName>
    </recommendedName>
</protein>
<reference key="1">
    <citation type="journal article" date="2002" name="Nature">
        <title>The genome sequence of Schizosaccharomyces pombe.</title>
        <authorList>
            <person name="Wood V."/>
            <person name="Gwilliam R."/>
            <person name="Rajandream M.A."/>
            <person name="Lyne M.H."/>
            <person name="Lyne R."/>
            <person name="Stewart A."/>
            <person name="Sgouros J.G."/>
            <person name="Peat N."/>
            <person name="Hayles J."/>
            <person name="Baker S.G."/>
            <person name="Basham D."/>
            <person name="Bowman S."/>
            <person name="Brooks K."/>
            <person name="Brown D."/>
            <person name="Brown S."/>
            <person name="Chillingworth T."/>
            <person name="Churcher C.M."/>
            <person name="Collins M."/>
            <person name="Connor R."/>
            <person name="Cronin A."/>
            <person name="Davis P."/>
            <person name="Feltwell T."/>
            <person name="Fraser A."/>
            <person name="Gentles S."/>
            <person name="Goble A."/>
            <person name="Hamlin N."/>
            <person name="Harris D.E."/>
            <person name="Hidalgo J."/>
            <person name="Hodgson G."/>
            <person name="Holroyd S."/>
            <person name="Hornsby T."/>
            <person name="Howarth S."/>
            <person name="Huckle E.J."/>
            <person name="Hunt S."/>
            <person name="Jagels K."/>
            <person name="James K.D."/>
            <person name="Jones L."/>
            <person name="Jones M."/>
            <person name="Leather S."/>
            <person name="McDonald S."/>
            <person name="McLean J."/>
            <person name="Mooney P."/>
            <person name="Moule S."/>
            <person name="Mungall K.L."/>
            <person name="Murphy L.D."/>
            <person name="Niblett D."/>
            <person name="Odell C."/>
            <person name="Oliver K."/>
            <person name="O'Neil S."/>
            <person name="Pearson D."/>
            <person name="Quail M.A."/>
            <person name="Rabbinowitsch E."/>
            <person name="Rutherford K.M."/>
            <person name="Rutter S."/>
            <person name="Saunders D."/>
            <person name="Seeger K."/>
            <person name="Sharp S."/>
            <person name="Skelton J."/>
            <person name="Simmonds M.N."/>
            <person name="Squares R."/>
            <person name="Squares S."/>
            <person name="Stevens K."/>
            <person name="Taylor K."/>
            <person name="Taylor R.G."/>
            <person name="Tivey A."/>
            <person name="Walsh S.V."/>
            <person name="Warren T."/>
            <person name="Whitehead S."/>
            <person name="Woodward J.R."/>
            <person name="Volckaert G."/>
            <person name="Aert R."/>
            <person name="Robben J."/>
            <person name="Grymonprez B."/>
            <person name="Weltjens I."/>
            <person name="Vanstreels E."/>
            <person name="Rieger M."/>
            <person name="Schaefer M."/>
            <person name="Mueller-Auer S."/>
            <person name="Gabel C."/>
            <person name="Fuchs M."/>
            <person name="Duesterhoeft A."/>
            <person name="Fritzc C."/>
            <person name="Holzer E."/>
            <person name="Moestl D."/>
            <person name="Hilbert H."/>
            <person name="Borzym K."/>
            <person name="Langer I."/>
            <person name="Beck A."/>
            <person name="Lehrach H."/>
            <person name="Reinhardt R."/>
            <person name="Pohl T.M."/>
            <person name="Eger P."/>
            <person name="Zimmermann W."/>
            <person name="Wedler H."/>
            <person name="Wambutt R."/>
            <person name="Purnelle B."/>
            <person name="Goffeau A."/>
            <person name="Cadieu E."/>
            <person name="Dreano S."/>
            <person name="Gloux S."/>
            <person name="Lelaure V."/>
            <person name="Mottier S."/>
            <person name="Galibert F."/>
            <person name="Aves S.J."/>
            <person name="Xiang Z."/>
            <person name="Hunt C."/>
            <person name="Moore K."/>
            <person name="Hurst S.M."/>
            <person name="Lucas M."/>
            <person name="Rochet M."/>
            <person name="Gaillardin C."/>
            <person name="Tallada V.A."/>
            <person name="Garzon A."/>
            <person name="Thode G."/>
            <person name="Daga R.R."/>
            <person name="Cruzado L."/>
            <person name="Jimenez J."/>
            <person name="Sanchez M."/>
            <person name="del Rey F."/>
            <person name="Benito J."/>
            <person name="Dominguez A."/>
            <person name="Revuelta J.L."/>
            <person name="Moreno S."/>
            <person name="Armstrong J."/>
            <person name="Forsburg S.L."/>
            <person name="Cerutti L."/>
            <person name="Lowe T."/>
            <person name="McCombie W.R."/>
            <person name="Paulsen I."/>
            <person name="Potashkin J."/>
            <person name="Shpakovski G.V."/>
            <person name="Ussery D."/>
            <person name="Barrell B.G."/>
            <person name="Nurse P."/>
        </authorList>
    </citation>
    <scope>NUCLEOTIDE SEQUENCE [LARGE SCALE GENOMIC DNA]</scope>
    <source>
        <strain>972 / ATCC 24843</strain>
    </source>
</reference>
<reference key="2">
    <citation type="journal article" date="2011" name="Science">
        <title>Comparative functional genomics of the fission yeasts.</title>
        <authorList>
            <person name="Rhind N."/>
            <person name="Chen Z."/>
            <person name="Yassour M."/>
            <person name="Thompson D.A."/>
            <person name="Haas B.J."/>
            <person name="Habib N."/>
            <person name="Wapinski I."/>
            <person name="Roy S."/>
            <person name="Lin M.F."/>
            <person name="Heiman D.I."/>
            <person name="Young S.K."/>
            <person name="Furuya K."/>
            <person name="Guo Y."/>
            <person name="Pidoux A."/>
            <person name="Chen H.M."/>
            <person name="Robbertse B."/>
            <person name="Goldberg J.M."/>
            <person name="Aoki K."/>
            <person name="Bayne E.H."/>
            <person name="Berlin A.M."/>
            <person name="Desjardins C.A."/>
            <person name="Dobbs E."/>
            <person name="Dukaj L."/>
            <person name="Fan L."/>
            <person name="FitzGerald M.G."/>
            <person name="French C."/>
            <person name="Gujja S."/>
            <person name="Hansen K."/>
            <person name="Keifenheim D."/>
            <person name="Levin J.Z."/>
            <person name="Mosher R.A."/>
            <person name="Mueller C.A."/>
            <person name="Pfiffner J."/>
            <person name="Priest M."/>
            <person name="Russ C."/>
            <person name="Smialowska A."/>
            <person name="Swoboda P."/>
            <person name="Sykes S.M."/>
            <person name="Vaughn M."/>
            <person name="Vengrova S."/>
            <person name="Yoder R."/>
            <person name="Zeng Q."/>
            <person name="Allshire R."/>
            <person name="Baulcombe D."/>
            <person name="Birren B.W."/>
            <person name="Brown W."/>
            <person name="Ekwall K."/>
            <person name="Kellis M."/>
            <person name="Leatherwood J."/>
            <person name="Levin H."/>
            <person name="Margalit H."/>
            <person name="Martienssen R."/>
            <person name="Nieduszynski C.A."/>
            <person name="Spatafora J.W."/>
            <person name="Friedman N."/>
            <person name="Dalgaard J.Z."/>
            <person name="Baumann P."/>
            <person name="Niki H."/>
            <person name="Regev A."/>
            <person name="Nusbaum C."/>
        </authorList>
    </citation>
    <scope>REVISION OF GENE MODEL</scope>
</reference>
<reference key="3">
    <citation type="journal article" date="2006" name="Nat. Biotechnol.">
        <title>ORFeome cloning and global analysis of protein localization in the fission yeast Schizosaccharomyces pombe.</title>
        <authorList>
            <person name="Matsuyama A."/>
            <person name="Arai R."/>
            <person name="Yashiroda Y."/>
            <person name="Shirai A."/>
            <person name="Kamata A."/>
            <person name="Sekido S."/>
            <person name="Kobayashi Y."/>
            <person name="Hashimoto A."/>
            <person name="Hamamoto M."/>
            <person name="Hiraoka Y."/>
            <person name="Horinouchi S."/>
            <person name="Yoshida M."/>
        </authorList>
    </citation>
    <scope>SUBCELLULAR LOCATION [LARGE SCALE ANALYSIS]</scope>
</reference>
<keyword id="KW-0963">Cytoplasm</keyword>
<keyword id="KW-0539">Nucleus</keyword>
<keyword id="KW-1185">Reference proteome</keyword>
<gene>
    <name type="ORF">SPBC776.06c</name>
</gene>